<feature type="chain" id="PRO_0000094513" description="UPF0201 protein PYRAB09730">
    <location>
        <begin position="1"/>
        <end position="138"/>
    </location>
</feature>
<proteinExistence type="inferred from homology"/>
<sequence length="138" mass="15988">MMAMFEEVEVEAYVYPTEDINKVKKAMLNLVPGLKFEAFDKGEYMILVGKTRDKRALQRLYELFRGQQILDTARMMLEEGYFGEEIIIKVHKQVAYAGKVNFNEESPLGPITITIRTKEPQKLMKWLAPRTKDGVPIE</sequence>
<reference key="1">
    <citation type="journal article" date="2003" name="Mol. Microbiol.">
        <title>An integrated analysis of the genome of the hyperthermophilic archaeon Pyrococcus abyssi.</title>
        <authorList>
            <person name="Cohen G.N."/>
            <person name="Barbe V."/>
            <person name="Flament D."/>
            <person name="Galperin M."/>
            <person name="Heilig R."/>
            <person name="Lecompte O."/>
            <person name="Poch O."/>
            <person name="Prieur D."/>
            <person name="Querellou J."/>
            <person name="Ripp R."/>
            <person name="Thierry J.-C."/>
            <person name="Van der Oost J."/>
            <person name="Weissenbach J."/>
            <person name="Zivanovic Y."/>
            <person name="Forterre P."/>
        </authorList>
    </citation>
    <scope>NUCLEOTIDE SEQUENCE [LARGE SCALE GENOMIC DNA]</scope>
    <source>
        <strain>GE5 / Orsay</strain>
    </source>
</reference>
<reference key="2">
    <citation type="journal article" date="2012" name="Curr. Microbiol.">
        <title>Re-annotation of two hyperthermophilic archaea Pyrococcus abyssi GE5 and Pyrococcus furiosus DSM 3638.</title>
        <authorList>
            <person name="Gao J."/>
            <person name="Wang J."/>
        </authorList>
    </citation>
    <scope>GENOME REANNOTATION</scope>
    <source>
        <strain>GE5 / Orsay</strain>
    </source>
</reference>
<accession>Q9V025</accession>
<accession>G8ZID8</accession>
<gene>
    <name type="ordered locus">PYRAB09730</name>
    <name type="ORF">PAB0654</name>
</gene>
<dbReference type="EMBL" id="AJ248286">
    <property type="protein sequence ID" value="CAB49881.1"/>
    <property type="molecule type" value="Genomic_DNA"/>
</dbReference>
<dbReference type="EMBL" id="HE613800">
    <property type="protein sequence ID" value="CCE70379.1"/>
    <property type="molecule type" value="Genomic_DNA"/>
</dbReference>
<dbReference type="PIR" id="D75072">
    <property type="entry name" value="D75072"/>
</dbReference>
<dbReference type="SMR" id="Q9V025"/>
<dbReference type="STRING" id="272844.PAB0654"/>
<dbReference type="KEGG" id="pab:PAB0654"/>
<dbReference type="PATRIC" id="fig|272844.11.peg.1025"/>
<dbReference type="eggNOG" id="arCOG01043">
    <property type="taxonomic scope" value="Archaea"/>
</dbReference>
<dbReference type="HOGENOM" id="CLU_134829_0_0_2"/>
<dbReference type="PhylomeDB" id="Q9V025"/>
<dbReference type="Proteomes" id="UP000000810">
    <property type="component" value="Chromosome"/>
</dbReference>
<dbReference type="Proteomes" id="UP000009139">
    <property type="component" value="Chromosome"/>
</dbReference>
<dbReference type="Gene3D" id="3.30.1440.10">
    <property type="match status" value="1"/>
</dbReference>
<dbReference type="HAMAP" id="MF_01112">
    <property type="entry name" value="UPF0201"/>
    <property type="match status" value="1"/>
</dbReference>
<dbReference type="InterPro" id="IPR002739">
    <property type="entry name" value="PAB1135-like"/>
</dbReference>
<dbReference type="InterPro" id="IPR022803">
    <property type="entry name" value="Ribosomal_uL5_dom_sf"/>
</dbReference>
<dbReference type="NCBIfam" id="NF001687">
    <property type="entry name" value="PRK00447.1"/>
    <property type="match status" value="1"/>
</dbReference>
<dbReference type="PANTHER" id="PTHR39652">
    <property type="entry name" value="UPF0201 PROTEIN TK1335"/>
    <property type="match status" value="1"/>
</dbReference>
<dbReference type="PANTHER" id="PTHR39652:SF1">
    <property type="entry name" value="UPF0201 PROTEIN TK1335"/>
    <property type="match status" value="1"/>
</dbReference>
<dbReference type="Pfam" id="PF01877">
    <property type="entry name" value="RNA_binding"/>
    <property type="match status" value="1"/>
</dbReference>
<dbReference type="SUPFAM" id="SSF55282">
    <property type="entry name" value="RL5-like"/>
    <property type="match status" value="1"/>
</dbReference>
<evidence type="ECO:0000255" key="1">
    <source>
        <dbReference type="HAMAP-Rule" id="MF_01112"/>
    </source>
</evidence>
<name>Y973_PYRAB</name>
<organism>
    <name type="scientific">Pyrococcus abyssi (strain GE5 / Orsay)</name>
    <dbReference type="NCBI Taxonomy" id="272844"/>
    <lineage>
        <taxon>Archaea</taxon>
        <taxon>Methanobacteriati</taxon>
        <taxon>Methanobacteriota</taxon>
        <taxon>Thermococci</taxon>
        <taxon>Thermococcales</taxon>
        <taxon>Thermococcaceae</taxon>
        <taxon>Pyrococcus</taxon>
    </lineage>
</organism>
<protein>
    <recommendedName>
        <fullName evidence="1">UPF0201 protein PYRAB09730</fullName>
    </recommendedName>
</protein>
<comment type="similarity">
    <text evidence="1">Belongs to the UPF0201 family.</text>
</comment>